<sequence length="458" mass="50695">MALAINVSSSSSSAISSSSFPSSDLKVTKIGSLRLLNRTNVSAASLSLSGKRSSVKALNVQSITKESIVASEVTEKLDVVEVEDFEELAKRLENASPLEIMDKALEKFGNDIAIAFSGAEDVALIEYAHLTGRPYRVFSLDTGRLNPETYRLFDTVEKHYGIRIEYMFPDAVEVQALVRNKGLFSFYEDGHQECCRIRKVRPLRRALKGLRAWITGQRKDQSPGTRSEIPVVQVDPVFEGLDGGVGSLVKWNPVANVEGNDVWNFLRTMDVPVNTLHAAGYVSIGCEPCTRAVLPGQHEREGRWWWEDAKAKECGLHKGNIKENTNGNATANVNGTASVADIFNSENVVNLSRQGIENLMKLENRKEAWIVVLYAPWCPFCQAMEASFDELADKLGGSGVKVAKFRADGDQKDFAKKELQLGSFPTILVFPKNSSRPIKYPSEKRDVDSLTSFLNLVR</sequence>
<comment type="function">
    <text>Reduces sulfate for Cys biosynthesis. Substrate preference is adenosine-5'-phosphosulfate (APS) &gt;&gt; 3'-phosphoadenosine-5'-phosphosulfate (PAPS). Uses glutathione or DTT as source of protons.</text>
</comment>
<comment type="catalytic activity">
    <reaction>
        <text>glutathione disulfide + sulfite + AMP + 2 H(+) = adenosine 5'-phosphosulfate + 2 glutathione</text>
        <dbReference type="Rhea" id="RHEA:14141"/>
        <dbReference type="ChEBI" id="CHEBI:15378"/>
        <dbReference type="ChEBI" id="CHEBI:17359"/>
        <dbReference type="ChEBI" id="CHEBI:57925"/>
        <dbReference type="ChEBI" id="CHEBI:58243"/>
        <dbReference type="ChEBI" id="CHEBI:58297"/>
        <dbReference type="ChEBI" id="CHEBI:456215"/>
        <dbReference type="EC" id="1.8.4.9"/>
    </reaction>
</comment>
<comment type="cofactor">
    <cofactor evidence="1">
        <name>[4Fe-4S] cluster</name>
        <dbReference type="ChEBI" id="CHEBI:49883"/>
    </cofactor>
    <text evidence="1">Binds 1 [4Fe-4S] cluster.</text>
</comment>
<comment type="activity regulation">
    <text evidence="1">Stimulated by sodium sulfate &gt; ammonium sulfate.</text>
</comment>
<comment type="subcellular location">
    <subcellularLocation>
        <location evidence="5">Plastid</location>
        <location evidence="5">Chloroplast</location>
    </subcellularLocation>
</comment>
<comment type="alternative products">
    <event type="alternative splicing"/>
    <isoform>
        <id>P92980-1</id>
        <name>1</name>
        <sequence type="displayed"/>
    </isoform>
    <text>A number of isoforms are produced. According to EST sequences.</text>
</comment>
<comment type="tissue specificity">
    <text>Leaves, roots and stem.</text>
</comment>
<comment type="induction">
    <text>By sulfate starvation.</text>
</comment>
<comment type="domain">
    <text evidence="1">The C-terminal domain may function as glutaredoxin and mediates the interaction of the enzyme with glutathione (GSH). Active in GSH-dependent reduction of hydroxyethyldisulfide, cystine, dehydroascorbate, insulin disulfides and ribonucleotide reductase (By similarity).</text>
</comment>
<comment type="similarity">
    <text evidence="5">Belongs to the APS reductase family.</text>
</comment>
<comment type="sequence caution" evidence="5">
    <conflict type="frameshift">
        <sequence resource="EMBL-CDS" id="AAC26978"/>
    </conflict>
</comment>
<evidence type="ECO:0000250" key="1"/>
<evidence type="ECO:0000255" key="2"/>
<evidence type="ECO:0000255" key="3">
    <source>
        <dbReference type="PROSITE-ProRule" id="PRU00691"/>
    </source>
</evidence>
<evidence type="ECO:0000256" key="4">
    <source>
        <dbReference type="SAM" id="MobiDB-lite"/>
    </source>
</evidence>
<evidence type="ECO:0000305" key="5"/>
<reference key="1">
    <citation type="journal article" date="1996" name="Proc. Natl. Acad. Sci. U.S.A.">
        <title>Three members of a novel small gene-family from Arabidopsis thaliana able to complement functionally an Escherichia coli mutant defective in PAPS reductase activity encode proteins with a thioredoxin-like domain and 'APS reductase' activity.</title>
        <authorList>
            <person name="Gutierrez-Marcos J.F."/>
            <person name="Roberts M.A."/>
            <person name="Campbell E.I."/>
            <person name="Wray J.L."/>
        </authorList>
    </citation>
    <scope>NUCLEOTIDE SEQUENCE [MRNA]</scope>
    <source>
        <strain>cv. Columbia</strain>
    </source>
</reference>
<reference key="2">
    <citation type="journal article" date="1996" name="Proc. Natl. Acad. Sci. U.S.A.">
        <title>Sulfate reduction in higher plants: molecular evidence for a novel 5'-adenylylsulfate reductase.</title>
        <authorList>
            <person name="Setya A."/>
            <person name="Murillo M."/>
            <person name="Leustek T."/>
        </authorList>
    </citation>
    <scope>NUCLEOTIDE SEQUENCE [GENOMIC DNA / MRNA]</scope>
    <source>
        <strain>cv. Columbia</strain>
    </source>
</reference>
<reference key="3">
    <citation type="online journal article" date="1998" name="Plant Gene Register">
        <title>Three genomic clones from Arabidopsis thaliana encoding 5'-adenylysulfate reductase.</title>
        <authorList>
            <person name="Chen Y.C."/>
            <person name="Leustek T."/>
        </authorList>
        <locator>PGR98-030</locator>
    </citation>
    <scope>NUCLEOTIDE SEQUENCE [GENOMIC DNA]</scope>
    <source>
        <strain>cv. Columbia</strain>
    </source>
</reference>
<reference key="4">
    <citation type="journal article" date="1999" name="Nature">
        <title>Sequence and analysis of chromosome 4 of the plant Arabidopsis thaliana.</title>
        <authorList>
            <person name="Mayer K.F.X."/>
            <person name="Schueller C."/>
            <person name="Wambutt R."/>
            <person name="Murphy G."/>
            <person name="Volckaert G."/>
            <person name="Pohl T."/>
            <person name="Duesterhoeft A."/>
            <person name="Stiekema W."/>
            <person name="Entian K.-D."/>
            <person name="Terryn N."/>
            <person name="Harris B."/>
            <person name="Ansorge W."/>
            <person name="Brandt P."/>
            <person name="Grivell L.A."/>
            <person name="Rieger M."/>
            <person name="Weichselgartner M."/>
            <person name="de Simone V."/>
            <person name="Obermaier B."/>
            <person name="Mache R."/>
            <person name="Mueller M."/>
            <person name="Kreis M."/>
            <person name="Delseny M."/>
            <person name="Puigdomenech P."/>
            <person name="Watson M."/>
            <person name="Schmidtheini T."/>
            <person name="Reichert B."/>
            <person name="Portetelle D."/>
            <person name="Perez-Alonso M."/>
            <person name="Boutry M."/>
            <person name="Bancroft I."/>
            <person name="Vos P."/>
            <person name="Hoheisel J."/>
            <person name="Zimmermann W."/>
            <person name="Wedler H."/>
            <person name="Ridley P."/>
            <person name="Langham S.-A."/>
            <person name="McCullagh B."/>
            <person name="Bilham L."/>
            <person name="Robben J."/>
            <person name="van der Schueren J."/>
            <person name="Grymonprez B."/>
            <person name="Chuang Y.-J."/>
            <person name="Vandenbussche F."/>
            <person name="Braeken M."/>
            <person name="Weltjens I."/>
            <person name="Voet M."/>
            <person name="Bastiaens I."/>
            <person name="Aert R."/>
            <person name="Defoor E."/>
            <person name="Weitzenegger T."/>
            <person name="Bothe G."/>
            <person name="Ramsperger U."/>
            <person name="Hilbert H."/>
            <person name="Braun M."/>
            <person name="Holzer E."/>
            <person name="Brandt A."/>
            <person name="Peters S."/>
            <person name="van Staveren M."/>
            <person name="Dirkse W."/>
            <person name="Mooijman P."/>
            <person name="Klein Lankhorst R."/>
            <person name="Rose M."/>
            <person name="Hauf J."/>
            <person name="Koetter P."/>
            <person name="Berneiser S."/>
            <person name="Hempel S."/>
            <person name="Feldpausch M."/>
            <person name="Lamberth S."/>
            <person name="Van den Daele H."/>
            <person name="De Keyser A."/>
            <person name="Buysshaert C."/>
            <person name="Gielen J."/>
            <person name="Villarroel R."/>
            <person name="De Clercq R."/>
            <person name="van Montagu M."/>
            <person name="Rogers J."/>
            <person name="Cronin A."/>
            <person name="Quail M.A."/>
            <person name="Bray-Allen S."/>
            <person name="Clark L."/>
            <person name="Doggett J."/>
            <person name="Hall S."/>
            <person name="Kay M."/>
            <person name="Lennard N."/>
            <person name="McLay K."/>
            <person name="Mayes R."/>
            <person name="Pettett A."/>
            <person name="Rajandream M.A."/>
            <person name="Lyne M."/>
            <person name="Benes V."/>
            <person name="Rechmann S."/>
            <person name="Borkova D."/>
            <person name="Bloecker H."/>
            <person name="Scharfe M."/>
            <person name="Grimm M."/>
            <person name="Loehnert T.-H."/>
            <person name="Dose S."/>
            <person name="de Haan M."/>
            <person name="Maarse A.C."/>
            <person name="Schaefer M."/>
            <person name="Mueller-Auer S."/>
            <person name="Gabel C."/>
            <person name="Fuchs M."/>
            <person name="Fartmann B."/>
            <person name="Granderath K."/>
            <person name="Dauner D."/>
            <person name="Herzl A."/>
            <person name="Neumann S."/>
            <person name="Argiriou A."/>
            <person name="Vitale D."/>
            <person name="Liguori R."/>
            <person name="Piravandi E."/>
            <person name="Massenet O."/>
            <person name="Quigley F."/>
            <person name="Clabauld G."/>
            <person name="Muendlein A."/>
            <person name="Felber R."/>
            <person name="Schnabl S."/>
            <person name="Hiller R."/>
            <person name="Schmidt W."/>
            <person name="Lecharny A."/>
            <person name="Aubourg S."/>
            <person name="Chefdor F."/>
            <person name="Cooke R."/>
            <person name="Berger C."/>
            <person name="Monfort A."/>
            <person name="Casacuberta E."/>
            <person name="Gibbons T."/>
            <person name="Weber N."/>
            <person name="Vandenbol M."/>
            <person name="Bargues M."/>
            <person name="Terol J."/>
            <person name="Torres A."/>
            <person name="Perez-Perez A."/>
            <person name="Purnelle B."/>
            <person name="Bent E."/>
            <person name="Johnson S."/>
            <person name="Tacon D."/>
            <person name="Jesse T."/>
            <person name="Heijnen L."/>
            <person name="Schwarz S."/>
            <person name="Scholler P."/>
            <person name="Heber S."/>
            <person name="Francs P."/>
            <person name="Bielke C."/>
            <person name="Frishman D."/>
            <person name="Haase D."/>
            <person name="Lemcke K."/>
            <person name="Mewes H.-W."/>
            <person name="Stocker S."/>
            <person name="Zaccaria P."/>
            <person name="Bevan M."/>
            <person name="Wilson R.K."/>
            <person name="de la Bastide M."/>
            <person name="Habermann K."/>
            <person name="Parnell L."/>
            <person name="Dedhia N."/>
            <person name="Gnoj L."/>
            <person name="Schutz K."/>
            <person name="Huang E."/>
            <person name="Spiegel L."/>
            <person name="Sekhon M."/>
            <person name="Murray J."/>
            <person name="Sheet P."/>
            <person name="Cordes M."/>
            <person name="Abu-Threideh J."/>
            <person name="Stoneking T."/>
            <person name="Kalicki J."/>
            <person name="Graves T."/>
            <person name="Harmon G."/>
            <person name="Edwards J."/>
            <person name="Latreille P."/>
            <person name="Courtney L."/>
            <person name="Cloud J."/>
            <person name="Abbott A."/>
            <person name="Scott K."/>
            <person name="Johnson D."/>
            <person name="Minx P."/>
            <person name="Bentley D."/>
            <person name="Fulton B."/>
            <person name="Miller N."/>
            <person name="Greco T."/>
            <person name="Kemp K."/>
            <person name="Kramer J."/>
            <person name="Fulton L."/>
            <person name="Mardis E."/>
            <person name="Dante M."/>
            <person name="Pepin K."/>
            <person name="Hillier L.W."/>
            <person name="Nelson J."/>
            <person name="Spieth J."/>
            <person name="Ryan E."/>
            <person name="Andrews S."/>
            <person name="Geisel C."/>
            <person name="Layman D."/>
            <person name="Du H."/>
            <person name="Ali J."/>
            <person name="Berghoff A."/>
            <person name="Jones K."/>
            <person name="Drone K."/>
            <person name="Cotton M."/>
            <person name="Joshu C."/>
            <person name="Antonoiu B."/>
            <person name="Zidanic M."/>
            <person name="Strong C."/>
            <person name="Sun H."/>
            <person name="Lamar B."/>
            <person name="Yordan C."/>
            <person name="Ma P."/>
            <person name="Zhong J."/>
            <person name="Preston R."/>
            <person name="Vil D."/>
            <person name="Shekher M."/>
            <person name="Matero A."/>
            <person name="Shah R."/>
            <person name="Swaby I.K."/>
            <person name="O'Shaughnessy A."/>
            <person name="Rodriguez M."/>
            <person name="Hoffman J."/>
            <person name="Till S."/>
            <person name="Granat S."/>
            <person name="Shohdy N."/>
            <person name="Hasegawa A."/>
            <person name="Hameed A."/>
            <person name="Lodhi M."/>
            <person name="Johnson A."/>
            <person name="Chen E."/>
            <person name="Marra M.A."/>
            <person name="Martienssen R."/>
            <person name="McCombie W.R."/>
        </authorList>
    </citation>
    <scope>NUCLEOTIDE SEQUENCE [LARGE SCALE GENOMIC DNA]</scope>
    <source>
        <strain>cv. Columbia</strain>
    </source>
</reference>
<reference key="5">
    <citation type="journal article" date="2017" name="Plant J.">
        <title>Araport11: a complete reannotation of the Arabidopsis thaliana reference genome.</title>
        <authorList>
            <person name="Cheng C.Y."/>
            <person name="Krishnakumar V."/>
            <person name="Chan A.P."/>
            <person name="Thibaud-Nissen F."/>
            <person name="Schobel S."/>
            <person name="Town C.D."/>
        </authorList>
    </citation>
    <scope>GENOME REANNOTATION</scope>
    <source>
        <strain>cv. Columbia</strain>
    </source>
</reference>
<reference key="6">
    <citation type="journal article" date="2003" name="Science">
        <title>Empirical analysis of transcriptional activity in the Arabidopsis genome.</title>
        <authorList>
            <person name="Yamada K."/>
            <person name="Lim J."/>
            <person name="Dale J.M."/>
            <person name="Chen H."/>
            <person name="Shinn P."/>
            <person name="Palm C.J."/>
            <person name="Southwick A.M."/>
            <person name="Wu H.C."/>
            <person name="Kim C.J."/>
            <person name="Nguyen M."/>
            <person name="Pham P.K."/>
            <person name="Cheuk R.F."/>
            <person name="Karlin-Newmann G."/>
            <person name="Liu S.X."/>
            <person name="Lam B."/>
            <person name="Sakano H."/>
            <person name="Wu T."/>
            <person name="Yu G."/>
            <person name="Miranda M."/>
            <person name="Quach H.L."/>
            <person name="Tripp M."/>
            <person name="Chang C.H."/>
            <person name="Lee J.M."/>
            <person name="Toriumi M.J."/>
            <person name="Chan M.M."/>
            <person name="Tang C.C."/>
            <person name="Onodera C.S."/>
            <person name="Deng J.M."/>
            <person name="Akiyama K."/>
            <person name="Ansari Y."/>
            <person name="Arakawa T."/>
            <person name="Banh J."/>
            <person name="Banno F."/>
            <person name="Bowser L."/>
            <person name="Brooks S.Y."/>
            <person name="Carninci P."/>
            <person name="Chao Q."/>
            <person name="Choy N."/>
            <person name="Enju A."/>
            <person name="Goldsmith A.D."/>
            <person name="Gurjal M."/>
            <person name="Hansen N.F."/>
            <person name="Hayashizaki Y."/>
            <person name="Johnson-Hopson C."/>
            <person name="Hsuan V.W."/>
            <person name="Iida K."/>
            <person name="Karnes M."/>
            <person name="Khan S."/>
            <person name="Koesema E."/>
            <person name="Ishida J."/>
            <person name="Jiang P.X."/>
            <person name="Jones T."/>
            <person name="Kawai J."/>
            <person name="Kamiya A."/>
            <person name="Meyers C."/>
            <person name="Nakajima M."/>
            <person name="Narusaka M."/>
            <person name="Seki M."/>
            <person name="Sakurai T."/>
            <person name="Satou M."/>
            <person name="Tamse R."/>
            <person name="Vaysberg M."/>
            <person name="Wallender E.K."/>
            <person name="Wong C."/>
            <person name="Yamamura Y."/>
            <person name="Yuan S."/>
            <person name="Shinozaki K."/>
            <person name="Davis R.W."/>
            <person name="Theologis A."/>
            <person name="Ecker J.R."/>
        </authorList>
    </citation>
    <scope>NUCLEOTIDE SEQUENCE [LARGE SCALE MRNA]</scope>
    <source>
        <strain>cv. Columbia</strain>
    </source>
</reference>
<reference key="7">
    <citation type="journal article" date="2009" name="DNA Res.">
        <title>Analysis of multiple occurrences of alternative splicing events in Arabidopsis thaliana using novel sequenced full-length cDNAs.</title>
        <authorList>
            <person name="Iida K."/>
            <person name="Fukami-Kobayashi K."/>
            <person name="Toyoda A."/>
            <person name="Sakaki Y."/>
            <person name="Kobayashi M."/>
            <person name="Seki M."/>
            <person name="Shinozaki K."/>
        </authorList>
    </citation>
    <scope>NUCLEOTIDE SEQUENCE [LARGE SCALE MRNA]</scope>
    <source>
        <strain>cv. Columbia</strain>
        <tissue>Rosette leaf</tissue>
    </source>
</reference>
<reference key="8">
    <citation type="submission" date="2002-03" db="EMBL/GenBank/DDBJ databases">
        <title>Full-length cDNA from Arabidopsis thaliana.</title>
        <authorList>
            <person name="Brover V.V."/>
            <person name="Troukhan M.E."/>
            <person name="Alexandrov N.A."/>
            <person name="Lu Y.-P."/>
            <person name="Flavell R.B."/>
            <person name="Feldmann K.A."/>
        </authorList>
    </citation>
    <scope>NUCLEOTIDE SEQUENCE [LARGE SCALE MRNA]</scope>
</reference>
<name>APR3_ARATH</name>
<feature type="transit peptide" description="Chloroplast" evidence="2">
    <location>
        <begin position="1"/>
        <end position="69"/>
    </location>
</feature>
<feature type="chain" id="PRO_0000023216" description="5'-adenylylsulfate reductase 3, chloroplastic">
    <location>
        <begin position="70"/>
        <end position="458"/>
    </location>
</feature>
<feature type="domain" description="Thioredoxin" evidence="3">
    <location>
        <begin position="337"/>
        <end position="458"/>
    </location>
</feature>
<feature type="region of interest" description="Disordered" evidence="4">
    <location>
        <begin position="1"/>
        <end position="24"/>
    </location>
</feature>
<feature type="region of interest" description="Reductase domain">
    <location>
        <begin position="70"/>
        <end position="319"/>
    </location>
</feature>
<feature type="compositionally biased region" description="Low complexity" evidence="4">
    <location>
        <begin position="8"/>
        <end position="23"/>
    </location>
</feature>
<feature type="active site" description="Nucleophile" evidence="1">
    <location>
        <position position="378"/>
    </location>
</feature>
<feature type="active site" description="Nucleophile" evidence="1">
    <location>
        <position position="381"/>
    </location>
</feature>
<feature type="disulfide bond" description="Redox-active" evidence="3">
    <location>
        <begin position="378"/>
        <end position="381"/>
    </location>
</feature>
<feature type="sequence conflict" description="In Ref. 2; AAC26978." evidence="5" ref="2">
    <original>T</original>
    <variation>A</variation>
    <location>
        <position position="28"/>
    </location>
</feature>
<feature type="sequence conflict" description="In Ref. 2; AAC26978." evidence="5" ref="2">
    <original>D</original>
    <variation>Y</variation>
    <location>
        <position position="121"/>
    </location>
</feature>
<feature type="sequence conflict" description="In Ref. 7; BAH57002." evidence="5" ref="7">
    <original>N</original>
    <variation>D</variation>
    <location>
        <position position="264"/>
    </location>
</feature>
<feature type="sequence conflict" description="In Ref. 8; AAM65133." evidence="5" ref="8">
    <original>S</original>
    <variation>T</variation>
    <location>
        <position position="338"/>
    </location>
</feature>
<feature type="sequence conflict" description="In Ref. 1; AAC49562." evidence="5" ref="1">
    <original>A</original>
    <variation>R</variation>
    <location>
        <position position="375"/>
    </location>
</feature>
<feature type="sequence conflict" description="In Ref. 1; AAC49562." evidence="5" ref="1">
    <original>R</original>
    <variation>I</variation>
    <location>
        <position position="436"/>
    </location>
</feature>
<keyword id="KW-0004">4Fe-4S</keyword>
<keyword id="KW-0025">Alternative splicing</keyword>
<keyword id="KW-0028">Amino-acid biosynthesis</keyword>
<keyword id="KW-0150">Chloroplast</keyword>
<keyword id="KW-0198">Cysteine biosynthesis</keyword>
<keyword id="KW-1015">Disulfide bond</keyword>
<keyword id="KW-0408">Iron</keyword>
<keyword id="KW-0411">Iron-sulfur</keyword>
<keyword id="KW-0479">Metal-binding</keyword>
<keyword id="KW-0560">Oxidoreductase</keyword>
<keyword id="KW-0934">Plastid</keyword>
<keyword id="KW-0676">Redox-active center</keyword>
<keyword id="KW-1185">Reference proteome</keyword>
<keyword id="KW-0346">Stress response</keyword>
<keyword id="KW-0809">Transit peptide</keyword>
<accession>P92980</accession>
<accession>C0Z2S3</accession>
<accession>O48887</accession>
<accession>Q38948</accession>
<accession>Q8LAV2</accession>
<organism>
    <name type="scientific">Arabidopsis thaliana</name>
    <name type="common">Mouse-ear cress</name>
    <dbReference type="NCBI Taxonomy" id="3702"/>
    <lineage>
        <taxon>Eukaryota</taxon>
        <taxon>Viridiplantae</taxon>
        <taxon>Streptophyta</taxon>
        <taxon>Embryophyta</taxon>
        <taxon>Tracheophyta</taxon>
        <taxon>Spermatophyta</taxon>
        <taxon>Magnoliopsida</taxon>
        <taxon>eudicotyledons</taxon>
        <taxon>Gunneridae</taxon>
        <taxon>Pentapetalae</taxon>
        <taxon>rosids</taxon>
        <taxon>malvids</taxon>
        <taxon>Brassicales</taxon>
        <taxon>Brassicaceae</taxon>
        <taxon>Camelineae</taxon>
        <taxon>Arabidopsis</taxon>
    </lineage>
</organism>
<gene>
    <name type="primary">APR3</name>
    <name type="synonym">PRH26</name>
    <name type="ordered locus">At4g21990</name>
    <name type="ORF">F1N20.90</name>
</gene>
<dbReference type="EC" id="1.8.4.9"/>
<dbReference type="EMBL" id="U53865">
    <property type="protein sequence ID" value="AAC49562.1"/>
    <property type="molecule type" value="mRNA"/>
</dbReference>
<dbReference type="EMBL" id="U56922">
    <property type="protein sequence ID" value="AAC26978.1"/>
    <property type="status" value="ALT_FRAME"/>
    <property type="molecule type" value="mRNA"/>
</dbReference>
<dbReference type="EMBL" id="AF016284">
    <property type="protein sequence ID" value="AAC26981.1"/>
    <property type="molecule type" value="Genomic_DNA"/>
</dbReference>
<dbReference type="EMBL" id="AL022140">
    <property type="protein sequence ID" value="CAA18102.1"/>
    <property type="molecule type" value="Genomic_DNA"/>
</dbReference>
<dbReference type="EMBL" id="AL161556">
    <property type="protein sequence ID" value="CAB79154.1"/>
    <property type="molecule type" value="Genomic_DNA"/>
</dbReference>
<dbReference type="EMBL" id="CP002687">
    <property type="protein sequence ID" value="AEE84539.1"/>
    <property type="molecule type" value="Genomic_DNA"/>
</dbReference>
<dbReference type="EMBL" id="AF428445">
    <property type="protein sequence ID" value="AAL16214.1"/>
    <property type="molecule type" value="mRNA"/>
</dbReference>
<dbReference type="EMBL" id="AY054175">
    <property type="protein sequence ID" value="AAL06836.1"/>
    <property type="molecule type" value="mRNA"/>
</dbReference>
<dbReference type="EMBL" id="AY062665">
    <property type="protein sequence ID" value="AAL32743.1"/>
    <property type="molecule type" value="mRNA"/>
</dbReference>
<dbReference type="EMBL" id="AY093319">
    <property type="protein sequence ID" value="AAM13318.1"/>
    <property type="molecule type" value="mRNA"/>
</dbReference>
<dbReference type="EMBL" id="AY103313">
    <property type="protein sequence ID" value="AAM65364.1"/>
    <property type="molecule type" value="mRNA"/>
</dbReference>
<dbReference type="EMBL" id="AK318887">
    <property type="protein sequence ID" value="BAH57002.1"/>
    <property type="molecule type" value="mRNA"/>
</dbReference>
<dbReference type="EMBL" id="AY087591">
    <property type="protein sequence ID" value="AAM65133.1"/>
    <property type="molecule type" value="mRNA"/>
</dbReference>
<dbReference type="PIR" id="T49106">
    <property type="entry name" value="T49106"/>
</dbReference>
<dbReference type="RefSeq" id="NP_193930.1">
    <molecule id="P92980-1"/>
    <property type="nucleotide sequence ID" value="NM_118320.3"/>
</dbReference>
<dbReference type="SMR" id="P92980"/>
<dbReference type="BioGRID" id="13577">
    <property type="interactions" value="1"/>
</dbReference>
<dbReference type="FunCoup" id="P92980">
    <property type="interactions" value="239"/>
</dbReference>
<dbReference type="IntAct" id="P92980">
    <property type="interactions" value="2"/>
</dbReference>
<dbReference type="STRING" id="3702.P92980"/>
<dbReference type="iPTMnet" id="P92980"/>
<dbReference type="PaxDb" id="3702-AT4G21990.1"/>
<dbReference type="ProteomicsDB" id="244440">
    <molecule id="P92980-1"/>
</dbReference>
<dbReference type="EnsemblPlants" id="AT4G21990.1">
    <molecule id="P92980-1"/>
    <property type="protein sequence ID" value="AT4G21990.1"/>
    <property type="gene ID" value="AT4G21990"/>
</dbReference>
<dbReference type="GeneID" id="828288"/>
<dbReference type="Gramene" id="AT4G21990.1">
    <molecule id="P92980-1"/>
    <property type="protein sequence ID" value="AT4G21990.1"/>
    <property type="gene ID" value="AT4G21990"/>
</dbReference>
<dbReference type="KEGG" id="ath:AT4G21990"/>
<dbReference type="Araport" id="AT4G21990"/>
<dbReference type="TAIR" id="AT4G21990">
    <property type="gene designation" value="APR3"/>
</dbReference>
<dbReference type="eggNOG" id="KOG0189">
    <property type="taxonomic scope" value="Eukaryota"/>
</dbReference>
<dbReference type="eggNOG" id="KOG0191">
    <property type="taxonomic scope" value="Eukaryota"/>
</dbReference>
<dbReference type="InParanoid" id="P92980"/>
<dbReference type="PhylomeDB" id="P92980"/>
<dbReference type="BioCyc" id="MetaCyc:AT4G21990-MONOMER"/>
<dbReference type="PRO" id="PR:P92980"/>
<dbReference type="Proteomes" id="UP000006548">
    <property type="component" value="Chromosome 4"/>
</dbReference>
<dbReference type="ExpressionAtlas" id="P92980">
    <property type="expression patterns" value="baseline and differential"/>
</dbReference>
<dbReference type="GO" id="GO:0009507">
    <property type="term" value="C:chloroplast"/>
    <property type="evidence" value="ECO:0007005"/>
    <property type="project" value="TAIR"/>
</dbReference>
<dbReference type="GO" id="GO:0051539">
    <property type="term" value="F:4 iron, 4 sulfur cluster binding"/>
    <property type="evidence" value="ECO:0007669"/>
    <property type="project" value="UniProtKB-KW"/>
</dbReference>
<dbReference type="GO" id="GO:0033741">
    <property type="term" value="F:adenylyl-sulfate reductase (glutathione) activity"/>
    <property type="evidence" value="ECO:0007669"/>
    <property type="project" value="UniProtKB-EC"/>
</dbReference>
<dbReference type="GO" id="GO:0009973">
    <property type="term" value="F:adenylyl-sulfate reductase activity"/>
    <property type="evidence" value="ECO:0000314"/>
    <property type="project" value="TAIR"/>
</dbReference>
<dbReference type="GO" id="GO:0046872">
    <property type="term" value="F:metal ion binding"/>
    <property type="evidence" value="ECO:0007669"/>
    <property type="project" value="UniProtKB-KW"/>
</dbReference>
<dbReference type="GO" id="GO:0004604">
    <property type="term" value="F:phosphoadenylyl-sulfate reductase (thioredoxin) activity"/>
    <property type="evidence" value="ECO:0007669"/>
    <property type="project" value="InterPro"/>
</dbReference>
<dbReference type="GO" id="GO:0019344">
    <property type="term" value="P:cysteine biosynthetic process"/>
    <property type="evidence" value="ECO:0007669"/>
    <property type="project" value="UniProtKB-KW"/>
</dbReference>
<dbReference type="GO" id="GO:0000103">
    <property type="term" value="P:sulfate assimilation"/>
    <property type="evidence" value="ECO:0000314"/>
    <property type="project" value="TAIR"/>
</dbReference>
<dbReference type="GO" id="GO:0019379">
    <property type="term" value="P:sulfate assimilation, phosphoadenylyl sulfate reduction by phosphoadenylyl-sulfate reductase (thioredoxin)"/>
    <property type="evidence" value="ECO:0007669"/>
    <property type="project" value="InterPro"/>
</dbReference>
<dbReference type="CDD" id="cd23945">
    <property type="entry name" value="PAPS_reductase"/>
    <property type="match status" value="1"/>
</dbReference>
<dbReference type="CDD" id="cd02993">
    <property type="entry name" value="PDI_a_APS_reductase"/>
    <property type="match status" value="1"/>
</dbReference>
<dbReference type="FunFam" id="3.40.50.620:FF:000153">
    <property type="entry name" value="Phosphoadenosine phosphosulfate reductase"/>
    <property type="match status" value="1"/>
</dbReference>
<dbReference type="FunFam" id="3.40.30.10:FF:000252">
    <property type="entry name" value="Phosphoadenosine-phosphosulphate reductase"/>
    <property type="match status" value="1"/>
</dbReference>
<dbReference type="Gene3D" id="3.40.30.10">
    <property type="entry name" value="Glutaredoxin"/>
    <property type="match status" value="1"/>
</dbReference>
<dbReference type="Gene3D" id="3.40.50.620">
    <property type="entry name" value="HUPs"/>
    <property type="match status" value="1"/>
</dbReference>
<dbReference type="HAMAP" id="MF_00063">
    <property type="entry name" value="CysH"/>
    <property type="match status" value="1"/>
</dbReference>
<dbReference type="InterPro" id="IPR004511">
    <property type="entry name" value="PAPS/APS_Rdtase"/>
</dbReference>
<dbReference type="InterPro" id="IPR002500">
    <property type="entry name" value="PAPS_reduct_dom"/>
</dbReference>
<dbReference type="InterPro" id="IPR014729">
    <property type="entry name" value="Rossmann-like_a/b/a_fold"/>
</dbReference>
<dbReference type="InterPro" id="IPR004508">
    <property type="entry name" value="Thioredoxin-indep_APS_Rdtase"/>
</dbReference>
<dbReference type="InterPro" id="IPR036249">
    <property type="entry name" value="Thioredoxin-like_sf"/>
</dbReference>
<dbReference type="InterPro" id="IPR013766">
    <property type="entry name" value="Thioredoxin_domain"/>
</dbReference>
<dbReference type="NCBIfam" id="TIGR00424">
    <property type="entry name" value="APS_reduc"/>
    <property type="match status" value="1"/>
</dbReference>
<dbReference type="NCBIfam" id="NF002537">
    <property type="entry name" value="PRK02090.1"/>
    <property type="match status" value="1"/>
</dbReference>
<dbReference type="PANTHER" id="PTHR46482">
    <property type="entry name" value="5'-ADENYLYLSULFATE REDUCTASE 3, CHLOROPLASTIC"/>
    <property type="match status" value="1"/>
</dbReference>
<dbReference type="PANTHER" id="PTHR46482:SF14">
    <property type="entry name" value="5'-ADENYLYLSULFATE REDUCTASE 3, CHLOROPLASTIC"/>
    <property type="match status" value="1"/>
</dbReference>
<dbReference type="Pfam" id="PF01507">
    <property type="entry name" value="PAPS_reduct"/>
    <property type="match status" value="1"/>
</dbReference>
<dbReference type="Pfam" id="PF00085">
    <property type="entry name" value="Thioredoxin"/>
    <property type="match status" value="1"/>
</dbReference>
<dbReference type="SUPFAM" id="SSF52402">
    <property type="entry name" value="Adenine nucleotide alpha hydrolases-like"/>
    <property type="match status" value="1"/>
</dbReference>
<dbReference type="SUPFAM" id="SSF52833">
    <property type="entry name" value="Thioredoxin-like"/>
    <property type="match status" value="1"/>
</dbReference>
<dbReference type="PROSITE" id="PS51352">
    <property type="entry name" value="THIOREDOXIN_2"/>
    <property type="match status" value="1"/>
</dbReference>
<proteinExistence type="evidence at transcript level"/>
<protein>
    <recommendedName>
        <fullName>5'-adenylylsulfate reductase 3, chloroplastic</fullName>
        <ecNumber>1.8.4.9</ecNumber>
    </recommendedName>
    <alternativeName>
        <fullName>3'-phosphoadenosine-5'-phosphosulfate reductase homolog 26</fullName>
        <shortName>PAPS reductase homolog 26</shortName>
        <shortName>Prh-26</shortName>
    </alternativeName>
    <alternativeName>
        <fullName>Adenosine 5'-phosphosulfate 5'-adenylylsulfate sulfotransferase 3</fullName>
        <shortName>APS sulfotransferase 3</shortName>
    </alternativeName>
    <alternativeName>
        <fullName>Thioredoxin-independent APS reductase 3</fullName>
    </alternativeName>
</protein>